<feature type="initiator methionine" description="Removed" evidence="3">
    <location>
        <position position="1"/>
    </location>
</feature>
<feature type="chain" id="PRO_0000273453" description="Tripartite motif-containing protein 5">
    <location>
        <begin position="2"/>
        <end position="515"/>
    </location>
</feature>
<feature type="domain" description="B30.2/SPRY" evidence="7">
    <location>
        <begin position="283"/>
        <end position="515"/>
    </location>
</feature>
<feature type="zinc finger region" description="RING-type" evidence="6">
    <location>
        <begin position="15"/>
        <end position="60"/>
    </location>
</feature>
<feature type="zinc finger region" description="B box-type" evidence="5">
    <location>
        <begin position="92"/>
        <end position="133"/>
    </location>
</feature>
<feature type="region of interest" description="Required for interaction with GABARAP and for autophagy" evidence="2">
    <location>
        <begin position="187"/>
        <end position="200"/>
    </location>
</feature>
<feature type="coiled-coil region" evidence="4">
    <location>
        <begin position="137"/>
        <end position="225"/>
    </location>
</feature>
<feature type="binding site" evidence="5">
    <location>
        <position position="97"/>
    </location>
    <ligand>
        <name>Zn(2+)</name>
        <dbReference type="ChEBI" id="CHEBI:29105"/>
    </ligand>
</feature>
<feature type="binding site" evidence="5">
    <location>
        <position position="100"/>
    </location>
    <ligand>
        <name>Zn(2+)</name>
        <dbReference type="ChEBI" id="CHEBI:29105"/>
    </ligand>
</feature>
<feature type="binding site" evidence="5">
    <location>
        <position position="119"/>
    </location>
    <ligand>
        <name>Zn(2+)</name>
        <dbReference type="ChEBI" id="CHEBI:29105"/>
    </ligand>
</feature>
<feature type="binding site" evidence="5">
    <location>
        <position position="125"/>
    </location>
    <ligand>
        <name>Zn(2+)</name>
        <dbReference type="ChEBI" id="CHEBI:29105"/>
    </ligand>
</feature>
<feature type="modified residue" description="N-acetylalanine" evidence="3">
    <location>
        <position position="2"/>
    </location>
</feature>
<feature type="modified residue" description="Phosphoserine" evidence="3">
    <location>
        <position position="87"/>
    </location>
</feature>
<feature type="sequence conflict" description="In Ref. 1; AAT81167 and 2; AAT48103/AAT48104." evidence="8" ref="1 2">
    <original>L</original>
    <variation>V</variation>
    <location>
        <position position="7"/>
    </location>
</feature>
<feature type="sequence conflict" description="In Ref. 1; AAT81167, 3; BAD93337 and 4; AAV91975." evidence="8" ref="1 3 4">
    <original>V</original>
    <variation>I</variation>
    <location>
        <position position="259"/>
    </location>
</feature>
<feature type="sequence conflict" description="In Ref. 2; AAT48104." evidence="8" ref="2">
    <original>Q</original>
    <variation>R</variation>
    <location>
        <position position="325"/>
    </location>
</feature>
<feature type="sequence conflict" description="In Ref. 2; AAT48104." evidence="8" ref="2">
    <original>A</original>
    <variation>S</variation>
    <location>
        <position position="333"/>
    </location>
</feature>
<feature type="sequence conflict" description="In Ref. 2; AAT48104 and 3; BAD93337." evidence="8" ref="2 3">
    <original>S</original>
    <variation>L</variation>
    <location>
        <position position="337"/>
    </location>
</feature>
<feature type="sequence conflict" description="In Ref. 2; AAT48104." evidence="8" ref="2">
    <original>N</original>
    <variation>S</variation>
    <location>
        <position position="345"/>
    </location>
</feature>
<feature type="sequence conflict" description="In Ref. 2; AAT48104." evidence="8" ref="2">
    <original>L</original>
    <variation>P</variation>
    <location>
        <position position="351"/>
    </location>
</feature>
<feature type="sequence conflict" description="In Ref. 3; BAD93337." evidence="8" ref="3">
    <original>L</original>
    <variation>R</variation>
    <location>
        <position position="351"/>
    </location>
</feature>
<feature type="sequence conflict" description="In Ref. 2; AAT48104 and 3; BAD93337." evidence="8" ref="2 3">
    <original>R</original>
    <variation>G</variation>
    <location>
        <position position="359"/>
    </location>
</feature>
<feature type="sequence conflict" description="In Ref. 1; AAT81167, 2; AAT48104 and 3; BAD93337." evidence="8" ref="1 2 3">
    <original>S</original>
    <variation>G</variation>
    <location>
        <position position="438"/>
    </location>
</feature>
<feature type="sequence conflict" description="In Ref. 1; AAT81167." evidence="8" ref="1">
    <original>C</original>
    <variation>R</variation>
    <location>
        <position position="469"/>
    </location>
</feature>
<evidence type="ECO:0000250" key="1"/>
<evidence type="ECO:0000250" key="2">
    <source>
        <dbReference type="UniProtKB" id="Q0PF16"/>
    </source>
</evidence>
<evidence type="ECO:0000250" key="3">
    <source>
        <dbReference type="UniProtKB" id="Q9C035"/>
    </source>
</evidence>
<evidence type="ECO:0000255" key="4"/>
<evidence type="ECO:0000255" key="5">
    <source>
        <dbReference type="PROSITE-ProRule" id="PRU00024"/>
    </source>
</evidence>
<evidence type="ECO:0000255" key="6">
    <source>
        <dbReference type="PROSITE-ProRule" id="PRU00175"/>
    </source>
</evidence>
<evidence type="ECO:0000255" key="7">
    <source>
        <dbReference type="PROSITE-ProRule" id="PRU00548"/>
    </source>
</evidence>
<evidence type="ECO:0000305" key="8"/>
<sequence>MASGILLNVKEEVTCPICLELLTEPLSLPCGHSFCQACITANHKESMLYKEEERSCPVCRISYQPENIQPNRHVANIVEKLREVKLSPEEGQKVDHCARHGEKLLLFCQEDSKVICWLCERSQEHRGHHTFLMEEVAQEYHVKLQTALEMLRQKQQEAEKLEADIREEKASWKIQIDYDKTNVSADFEQLREILDWEESNELQNLEKEEEDILKSLTKSETEMVQQTQYMRELISDLEHRLQGSMMELLQGVDGIIKRVENMTLKKPKTFHKNQRRVFRAPDLKGMLDMFRELTDVRRYWVDVTLAPNNISHAVIAEDKRQVSYQNPQIMYQAPGSSFGSLTNFNYCTGVLGSQSITSRKLTNFNYCTGVLGSQSITSGKHYWEVDVSKKSAWILGVCAGFQPDATYNIEQNENYQPKYGYWVIGLQEGDKYSVFQDSSSHTPFAPFIVPLSVIICPDRVGVFVDYEACTVSFFNITNHGFLIYKFSQCSFSKPVFPYLNPRKCTVPMTLCSPSS</sequence>
<organism>
    <name type="scientific">Chlorocebus aethiops</name>
    <name type="common">Green monkey</name>
    <name type="synonym">Cercopithecus aethiops</name>
    <dbReference type="NCBI Taxonomy" id="9534"/>
    <lineage>
        <taxon>Eukaryota</taxon>
        <taxon>Metazoa</taxon>
        <taxon>Chordata</taxon>
        <taxon>Craniata</taxon>
        <taxon>Vertebrata</taxon>
        <taxon>Euteleostomi</taxon>
        <taxon>Mammalia</taxon>
        <taxon>Eutheria</taxon>
        <taxon>Euarchontoglires</taxon>
        <taxon>Primates</taxon>
        <taxon>Haplorrhini</taxon>
        <taxon>Catarrhini</taxon>
        <taxon>Cercopithecidae</taxon>
        <taxon>Cercopithecinae</taxon>
        <taxon>Chlorocebus</taxon>
    </lineage>
</organism>
<accession>Q587N7</accession>
<accession>Q587N8</accession>
<accession>Q5D7J3</accession>
<accession>Q6BC81</accession>
<accession>Q6GX23</accession>
<accession>Q6GX24</accession>
<reference key="1">
    <citation type="journal article" date="2004" name="Proc. Natl. Acad. Sci. U.S.A.">
        <title>Retrovirus resistance factors Ref1 and Lv1 are species-specific variants of TRIM5alpha.</title>
        <authorList>
            <person name="Hatziioannou T."/>
            <person name="Perez-Caballero D."/>
            <person name="Yang A."/>
            <person name="Cowan S."/>
            <person name="Bieniasz P.D."/>
        </authorList>
    </citation>
    <scope>NUCLEOTIDE SEQUENCE [MRNA]</scope>
</reference>
<reference key="2">
    <citation type="journal article" date="2004" name="Proc. Natl. Acad. Sci. U.S.A.">
        <title>Trim5alpha protein restricts both HIV-1 and murine leukemia virus.</title>
        <authorList>
            <person name="Yap M.W."/>
            <person name="Nisole S."/>
            <person name="Lynch C."/>
            <person name="Stoye J.P."/>
        </authorList>
    </citation>
    <scope>NUCLEOTIDE SEQUENCE [MRNA]</scope>
</reference>
<reference key="3">
    <citation type="journal article" date="2005" name="J. Virol.">
        <title>A specific region of 37 amino acid residues in the SPRY (B30.2) domain of African green monkey TRIM5alpha determines species-specific restriction of simian immunodeficiency virus SIVmac infection.</title>
        <authorList>
            <person name="Nakayama E.E."/>
            <person name="Miyoshi H."/>
            <person name="Nagai Y."/>
            <person name="Shioda T."/>
        </authorList>
    </citation>
    <scope>NUCLEOTIDE SEQUENCE [MRNA]</scope>
</reference>
<reference key="4">
    <citation type="journal article" date="2005" name="Proc. Natl. Acad. Sci. U.S.A.">
        <title>Positive selection of primate TRIM5alpha identifies a critical species-specific retroviral restriction domain.</title>
        <authorList>
            <person name="Sawyer S.L."/>
            <person name="Wu L.I."/>
            <person name="Emerman M."/>
            <person name="Malik H.S."/>
        </authorList>
    </citation>
    <scope>NUCLEOTIDE SEQUENCE [GENOMIC DNA]</scope>
</reference>
<keyword id="KW-0007">Acetylation</keyword>
<keyword id="KW-0051">Antiviral defense</keyword>
<keyword id="KW-0072">Autophagy</keyword>
<keyword id="KW-0175">Coiled coil</keyword>
<keyword id="KW-0963">Cytoplasm</keyword>
<keyword id="KW-0391">Immunity</keyword>
<keyword id="KW-0399">Innate immunity</keyword>
<keyword id="KW-0479">Metal-binding</keyword>
<keyword id="KW-0539">Nucleus</keyword>
<keyword id="KW-0597">Phosphoprotein</keyword>
<keyword id="KW-0808">Transferase</keyword>
<keyword id="KW-0832">Ubl conjugation</keyword>
<keyword id="KW-0833">Ubl conjugation pathway</keyword>
<keyword id="KW-0862">Zinc</keyword>
<keyword id="KW-0863">Zinc-finger</keyword>
<proteinExistence type="evidence at transcript level"/>
<comment type="function">
    <text evidence="3">Capsid-specific restriction factor that prevents infection from non-host-adapted retroviruses. Blocks viral replication early in the life cycle, after viral entry but before reverse transcription. In addition to acting as a capsid-specific restriction factor, also acts as a pattern recognition receptor that activates innate immune signaling in response to the retroviral capsid lattice. Binding to the viral capsid triggers its E3 ubiquitin ligase activity, and in concert with the heterodimeric ubiquitin conjugating enzyme complex UBE2V1-UBE2N (also known as UBC13-UEV1A complex) generates 'Lys-63'-linked polyubiquitin chains, which in turn are catalysts in the autophosphorylation of the MAP3K7/TAK1 complex (includes TAK1, TAB2, and TAB3). Activation of the MAP3K7/TAK1 complex by autophosphorylation results in the induction and expression of NF-kappa-B and MAPK-responsive inflammatory genes, thereby leading to an innate immune response in the infected cell. Plays a role in regulating autophagy through activation of autophagy regulator BECN1 by causing its dissociation from its inhibitors BCL2 and TAB2.</text>
</comment>
<comment type="catalytic activity">
    <reaction>
        <text>S-ubiquitinyl-[E2 ubiquitin-conjugating enzyme]-L-cysteine + [acceptor protein]-L-lysine = [E2 ubiquitin-conjugating enzyme]-L-cysteine + N(6)-ubiquitinyl-[acceptor protein]-L-lysine.</text>
        <dbReference type="EC" id="2.3.2.27"/>
    </reaction>
</comment>
<comment type="pathway">
    <text>Protein modification; protein ubiquitination.</text>
</comment>
<comment type="subunit">
    <text evidence="2 3">Can form homodimers and homotrimers. In addition to lower-order dimerization, also exhibits a higher-order multimerization and both low- and high-order multimerizations are essential for its restriction activity. Interacts with BTBD1 and BTBD2. Interacts with PSMC4, PSMC5, PSMD7 and HSPA8/HSC70. Interacts (via B30.2/SPRY domain) with HSPA1A/B. Interacts with PSMC2, MAP3K7/TAK1, TAB2 and TAB3. Interacts with SQSTM1. Interacts with TRIM6 and TRIM34. Interacts with ULK1 (phosphorylated form), GABARAP, GABARAPL1, GABARAPL2, MAP1LC3A, MAP1LC3C and BECN1.</text>
</comment>
<comment type="subcellular location">
    <subcellularLocation>
        <location evidence="2">Cytoplasm</location>
    </subcellularLocation>
    <subcellularLocation>
        <location evidence="2">Nucleus</location>
    </subcellularLocation>
    <text evidence="2">Predominantly localizes in cytoplasmic bodies. Localization may be influenced by the coexpression of other TRIM proteins, hence partial nuclear localization is observed in the presence of TRIM22 or TRIM27. In cytoplasmic bodies, colocalizes with proteasomal subunits and SQSTM1.</text>
</comment>
<comment type="domain">
    <text evidence="2 3">The B box-type zinc finger domain and the coiled-coil domain contribute to the higher and low order multimerization respectively which is essential for restriction activity. The coiled coil domain is important for higher order multimerization by promoting the initial dimerization.</text>
</comment>
<comment type="domain">
    <text evidence="1">The B30.2/SPRY domain acts as a capsid recognition domain. Polymorphisms in this domain explain the observed species-specific differences among orthologs (By similarity).</text>
</comment>
<comment type="domain">
    <text evidence="1">The RING-type zinc finger domain confers E3 ubiquitin ligase activity and is essential for retrovirus restriction activity, autoubiquitination and higher-order multimerization.</text>
</comment>
<comment type="PTM">
    <text evidence="1">Degraded in a proteasome-independent fashion in the absence of viral infection but in a proteasome-dependent fashion following exposure to restriction sensitive virus.</text>
</comment>
<comment type="PTM">
    <text evidence="1">Autoubiquitinated in a RING finger- and UBE2D2-dependent manner. Monoubiquitinated by TRIM21. Deubiquitinated by Yersinia YopJ. Ubiquitination may not lead to proteasomal degradation (By similarity).</text>
</comment>
<comment type="similarity">
    <text evidence="8">Belongs to the TRIM/RBCC family.</text>
</comment>
<comment type="online information" name="Wikipedia">
    <link uri="https://en.wikipedia.org/wiki/TRIM5alpha"/>
    <text>TRIM5alpha entry</text>
</comment>
<protein>
    <recommendedName>
        <fullName>Tripartite motif-containing protein 5</fullName>
        <ecNumber>2.3.2.27</ecNumber>
    </recommendedName>
    <alternativeName>
        <fullName evidence="8">RING-type E3 ubiquitin transferase TRIM5</fullName>
    </alternativeName>
    <alternativeName>
        <fullName>TRIM5alpha</fullName>
    </alternativeName>
</protein>
<name>TRIM5_CHLAE</name>
<dbReference type="EC" id="2.3.2.27"/>
<dbReference type="EMBL" id="AY669399">
    <property type="protein sequence ID" value="AAT81167.1"/>
    <property type="molecule type" value="mRNA"/>
</dbReference>
<dbReference type="EMBL" id="AY625002">
    <property type="protein sequence ID" value="AAT48103.1"/>
    <property type="molecule type" value="mRNA"/>
</dbReference>
<dbReference type="EMBL" id="AY625003">
    <property type="protein sequence ID" value="AAT48104.1"/>
    <property type="molecule type" value="mRNA"/>
</dbReference>
<dbReference type="EMBL" id="AB210050">
    <property type="protein sequence ID" value="BAD93337.1"/>
    <property type="molecule type" value="mRNA"/>
</dbReference>
<dbReference type="EMBL" id="AB210051">
    <property type="protein sequence ID" value="BAD93338.1"/>
    <property type="molecule type" value="mRNA"/>
</dbReference>
<dbReference type="EMBL" id="AY843504">
    <property type="protein sequence ID" value="AAV91975.1"/>
    <property type="molecule type" value="Genomic_DNA"/>
</dbReference>
<dbReference type="SMR" id="Q587N7"/>
<dbReference type="UniPathway" id="UPA00143"/>
<dbReference type="GO" id="GO:0005634">
    <property type="term" value="C:nucleus"/>
    <property type="evidence" value="ECO:0007669"/>
    <property type="project" value="UniProtKB-SubCell"/>
</dbReference>
<dbReference type="GO" id="GO:0000932">
    <property type="term" value="C:P-body"/>
    <property type="evidence" value="ECO:0000250"/>
    <property type="project" value="UniProtKB"/>
</dbReference>
<dbReference type="GO" id="GO:0038187">
    <property type="term" value="F:pattern recognition receptor activity"/>
    <property type="evidence" value="ECO:0000250"/>
    <property type="project" value="UniProtKB"/>
</dbReference>
<dbReference type="GO" id="GO:0004842">
    <property type="term" value="F:ubiquitin-protein transferase activity"/>
    <property type="evidence" value="ECO:0000250"/>
    <property type="project" value="UniProtKB"/>
</dbReference>
<dbReference type="GO" id="GO:0008270">
    <property type="term" value="F:zinc ion binding"/>
    <property type="evidence" value="ECO:0007669"/>
    <property type="project" value="UniProtKB-KW"/>
</dbReference>
<dbReference type="GO" id="GO:0002218">
    <property type="term" value="P:activation of innate immune response"/>
    <property type="evidence" value="ECO:0000250"/>
    <property type="project" value="UniProtKB"/>
</dbReference>
<dbReference type="GO" id="GO:0006914">
    <property type="term" value="P:autophagy"/>
    <property type="evidence" value="ECO:0007669"/>
    <property type="project" value="UniProtKB-KW"/>
</dbReference>
<dbReference type="GO" id="GO:0051607">
    <property type="term" value="P:defense response to virus"/>
    <property type="evidence" value="ECO:0007669"/>
    <property type="project" value="UniProtKB-KW"/>
</dbReference>
<dbReference type="GO" id="GO:0045087">
    <property type="term" value="P:innate immune response"/>
    <property type="evidence" value="ECO:0007669"/>
    <property type="project" value="UniProtKB-KW"/>
</dbReference>
<dbReference type="GO" id="GO:0043123">
    <property type="term" value="P:positive regulation of canonical NF-kappaB signal transduction"/>
    <property type="evidence" value="ECO:0000250"/>
    <property type="project" value="UniProtKB"/>
</dbReference>
<dbReference type="GO" id="GO:0043410">
    <property type="term" value="P:positive regulation of MAPK cascade"/>
    <property type="evidence" value="ECO:0000250"/>
    <property type="project" value="UniProtKB"/>
</dbReference>
<dbReference type="GO" id="GO:0051092">
    <property type="term" value="P:positive regulation of NF-kappaB transcription factor activity"/>
    <property type="evidence" value="ECO:0000250"/>
    <property type="project" value="UniProtKB"/>
</dbReference>
<dbReference type="GO" id="GO:0070534">
    <property type="term" value="P:protein K63-linked ubiquitination"/>
    <property type="evidence" value="ECO:0000250"/>
    <property type="project" value="UniProtKB"/>
</dbReference>
<dbReference type="GO" id="GO:0031664">
    <property type="term" value="P:regulation of lipopolysaccharide-mediated signaling pathway"/>
    <property type="evidence" value="ECO:0000250"/>
    <property type="project" value="UniProtKB"/>
</dbReference>
<dbReference type="CDD" id="cd19761">
    <property type="entry name" value="Bbox2_TRIM5-like"/>
    <property type="match status" value="1"/>
</dbReference>
<dbReference type="CDD" id="cd16591">
    <property type="entry name" value="RING-HC_TRIM5-like_C-IV"/>
    <property type="match status" value="1"/>
</dbReference>
<dbReference type="CDD" id="cd15822">
    <property type="entry name" value="SPRY_PRY_TRIM5"/>
    <property type="match status" value="1"/>
</dbReference>
<dbReference type="FunFam" id="3.30.160.60:FF:000386">
    <property type="entry name" value="Tripartite motif-containing 5 (Predicted)"/>
    <property type="match status" value="1"/>
</dbReference>
<dbReference type="FunFam" id="3.30.40.10:FF:000144">
    <property type="entry name" value="Tripartite motif-containing 5 (Predicted)"/>
    <property type="match status" value="1"/>
</dbReference>
<dbReference type="Gene3D" id="2.60.120.920">
    <property type="match status" value="1"/>
</dbReference>
<dbReference type="Gene3D" id="3.30.160.60">
    <property type="entry name" value="Classic Zinc Finger"/>
    <property type="match status" value="1"/>
</dbReference>
<dbReference type="Gene3D" id="3.30.40.10">
    <property type="entry name" value="Zinc/RING finger domain, C3HC4 (zinc finger)"/>
    <property type="match status" value="1"/>
</dbReference>
<dbReference type="InterPro" id="IPR001870">
    <property type="entry name" value="B30.2/SPRY"/>
</dbReference>
<dbReference type="InterPro" id="IPR043136">
    <property type="entry name" value="B30.2/SPRY_sf"/>
</dbReference>
<dbReference type="InterPro" id="IPR003879">
    <property type="entry name" value="Butyrophylin_SPRY"/>
</dbReference>
<dbReference type="InterPro" id="IPR013320">
    <property type="entry name" value="ConA-like_dom_sf"/>
</dbReference>
<dbReference type="InterPro" id="IPR003877">
    <property type="entry name" value="SPRY_dom"/>
</dbReference>
<dbReference type="InterPro" id="IPR050143">
    <property type="entry name" value="TRIM/RBCC"/>
</dbReference>
<dbReference type="InterPro" id="IPR027370">
    <property type="entry name" value="Znf-RING_euk"/>
</dbReference>
<dbReference type="InterPro" id="IPR000315">
    <property type="entry name" value="Znf_B-box"/>
</dbReference>
<dbReference type="InterPro" id="IPR001841">
    <property type="entry name" value="Znf_RING"/>
</dbReference>
<dbReference type="InterPro" id="IPR013083">
    <property type="entry name" value="Znf_RING/FYVE/PHD"/>
</dbReference>
<dbReference type="InterPro" id="IPR017907">
    <property type="entry name" value="Znf_RING_CS"/>
</dbReference>
<dbReference type="PANTHER" id="PTHR24103">
    <property type="entry name" value="E3 UBIQUITIN-PROTEIN LIGASE TRIM"/>
    <property type="match status" value="1"/>
</dbReference>
<dbReference type="Pfam" id="PF00622">
    <property type="entry name" value="SPRY"/>
    <property type="match status" value="1"/>
</dbReference>
<dbReference type="Pfam" id="PF00643">
    <property type="entry name" value="zf-B_box"/>
    <property type="match status" value="1"/>
</dbReference>
<dbReference type="Pfam" id="PF13445">
    <property type="entry name" value="zf-RING_UBOX"/>
    <property type="match status" value="1"/>
</dbReference>
<dbReference type="PRINTS" id="PR01407">
    <property type="entry name" value="BUTYPHLNCDUF"/>
</dbReference>
<dbReference type="SMART" id="SM00336">
    <property type="entry name" value="BBOX"/>
    <property type="match status" value="1"/>
</dbReference>
<dbReference type="SMART" id="SM00184">
    <property type="entry name" value="RING"/>
    <property type="match status" value="1"/>
</dbReference>
<dbReference type="SMART" id="SM00449">
    <property type="entry name" value="SPRY"/>
    <property type="match status" value="1"/>
</dbReference>
<dbReference type="SUPFAM" id="SSF57845">
    <property type="entry name" value="B-box zinc-binding domain"/>
    <property type="match status" value="1"/>
</dbReference>
<dbReference type="SUPFAM" id="SSF49899">
    <property type="entry name" value="Concanavalin A-like lectins/glucanases"/>
    <property type="match status" value="1"/>
</dbReference>
<dbReference type="SUPFAM" id="SSF57850">
    <property type="entry name" value="RING/U-box"/>
    <property type="match status" value="1"/>
</dbReference>
<dbReference type="PROSITE" id="PS50188">
    <property type="entry name" value="B302_SPRY"/>
    <property type="match status" value="1"/>
</dbReference>
<dbReference type="PROSITE" id="PS50119">
    <property type="entry name" value="ZF_BBOX"/>
    <property type="match status" value="1"/>
</dbReference>
<dbReference type="PROSITE" id="PS00518">
    <property type="entry name" value="ZF_RING_1"/>
    <property type="match status" value="1"/>
</dbReference>
<dbReference type="PROSITE" id="PS50089">
    <property type="entry name" value="ZF_RING_2"/>
    <property type="match status" value="1"/>
</dbReference>
<gene>
    <name type="primary">TRIM5</name>
</gene>